<feature type="chain" id="PRO_1000050616" description="Peptidase E">
    <location>
        <begin position="1"/>
        <end position="235"/>
    </location>
</feature>
<feature type="active site" description="Charge relay system" evidence="1">
    <location>
        <position position="122"/>
    </location>
</feature>
<feature type="active site" description="Charge relay system" evidence="1">
    <location>
        <position position="137"/>
    </location>
</feature>
<feature type="active site" description="Charge relay system" evidence="1">
    <location>
        <position position="159"/>
    </location>
</feature>
<comment type="function">
    <text evidence="1">Hydrolyzes dipeptides containing N-terminal aspartate residues. May play a role in allowing the cell to use peptide aspartate to spare carbon otherwise required for the synthesis of the aspartate family of amino acids.</text>
</comment>
<comment type="catalytic activity">
    <reaction evidence="1">
        <text>Dipeptidase E catalyzes the hydrolysis of dipeptides Asp-|-Xaa. It does not act on peptides with N-terminal Glu, Asn or Gln, nor does it cleave isoaspartyl peptides.</text>
        <dbReference type="EC" id="3.4.13.21"/>
    </reaction>
</comment>
<comment type="subcellular location">
    <subcellularLocation>
        <location evidence="1">Cytoplasm</location>
    </subcellularLocation>
</comment>
<comment type="similarity">
    <text evidence="1">Belongs to the peptidase S51 family.</text>
</comment>
<reference key="1">
    <citation type="submission" date="2006-03" db="EMBL/GenBank/DDBJ databases">
        <title>Complete sequence of Shewanella denitrificans OS217.</title>
        <authorList>
            <consortium name="US DOE Joint Genome Institute"/>
            <person name="Copeland A."/>
            <person name="Lucas S."/>
            <person name="Lapidus A."/>
            <person name="Barry K."/>
            <person name="Detter J.C."/>
            <person name="Glavina del Rio T."/>
            <person name="Hammon N."/>
            <person name="Israni S."/>
            <person name="Dalin E."/>
            <person name="Tice H."/>
            <person name="Pitluck S."/>
            <person name="Brettin T."/>
            <person name="Bruce D."/>
            <person name="Han C."/>
            <person name="Tapia R."/>
            <person name="Gilna P."/>
            <person name="Kiss H."/>
            <person name="Schmutz J."/>
            <person name="Larimer F."/>
            <person name="Land M."/>
            <person name="Hauser L."/>
            <person name="Kyrpides N."/>
            <person name="Lykidis A."/>
            <person name="Richardson P."/>
        </authorList>
    </citation>
    <scope>NUCLEOTIDE SEQUENCE [LARGE SCALE GENOMIC DNA]</scope>
    <source>
        <strain>OS217 / ATCC BAA-1090 / DSM 15013</strain>
    </source>
</reference>
<proteinExistence type="inferred from homology"/>
<dbReference type="EC" id="3.4.13.21" evidence="1"/>
<dbReference type="EMBL" id="CP000302">
    <property type="protein sequence ID" value="ABE55413.1"/>
    <property type="molecule type" value="Genomic_DNA"/>
</dbReference>
<dbReference type="RefSeq" id="WP_011496568.1">
    <property type="nucleotide sequence ID" value="NC_007954.1"/>
</dbReference>
<dbReference type="SMR" id="Q12MB3"/>
<dbReference type="STRING" id="318161.Sden_2131"/>
<dbReference type="MEROPS" id="S51.001"/>
<dbReference type="KEGG" id="sdn:Sden_2131"/>
<dbReference type="eggNOG" id="COG3340">
    <property type="taxonomic scope" value="Bacteria"/>
</dbReference>
<dbReference type="HOGENOM" id="CLU_071689_0_0_6"/>
<dbReference type="OrthoDB" id="3373764at2"/>
<dbReference type="Proteomes" id="UP000001982">
    <property type="component" value="Chromosome"/>
</dbReference>
<dbReference type="GO" id="GO:0005737">
    <property type="term" value="C:cytoplasm"/>
    <property type="evidence" value="ECO:0007669"/>
    <property type="project" value="UniProtKB-SubCell"/>
</dbReference>
<dbReference type="GO" id="GO:0016805">
    <property type="term" value="F:dipeptidase activity"/>
    <property type="evidence" value="ECO:0007669"/>
    <property type="project" value="UniProtKB-UniRule"/>
</dbReference>
<dbReference type="GO" id="GO:0008236">
    <property type="term" value="F:serine-type peptidase activity"/>
    <property type="evidence" value="ECO:0007669"/>
    <property type="project" value="UniProtKB-KW"/>
</dbReference>
<dbReference type="GO" id="GO:0006508">
    <property type="term" value="P:proteolysis"/>
    <property type="evidence" value="ECO:0007669"/>
    <property type="project" value="UniProtKB-UniRule"/>
</dbReference>
<dbReference type="CDD" id="cd03146">
    <property type="entry name" value="GAT1_Peptidase_E"/>
    <property type="match status" value="1"/>
</dbReference>
<dbReference type="FunFam" id="3.40.50.880:FF:000007">
    <property type="entry name" value="Peptidase E"/>
    <property type="match status" value="1"/>
</dbReference>
<dbReference type="Gene3D" id="3.40.50.880">
    <property type="match status" value="1"/>
</dbReference>
<dbReference type="HAMAP" id="MF_00510">
    <property type="entry name" value="Peptidase_E"/>
    <property type="match status" value="1"/>
</dbReference>
<dbReference type="InterPro" id="IPR029062">
    <property type="entry name" value="Class_I_gatase-like"/>
</dbReference>
<dbReference type="InterPro" id="IPR005320">
    <property type="entry name" value="Peptidase_S51"/>
</dbReference>
<dbReference type="InterPro" id="IPR023172">
    <property type="entry name" value="Peptidase_S51_dipeptidase-E"/>
</dbReference>
<dbReference type="NCBIfam" id="NF003642">
    <property type="entry name" value="PRK05282.1"/>
    <property type="match status" value="1"/>
</dbReference>
<dbReference type="PANTHER" id="PTHR20842:SF0">
    <property type="entry name" value="ALPHA-ASPARTYL DIPEPTIDASE"/>
    <property type="match status" value="1"/>
</dbReference>
<dbReference type="PANTHER" id="PTHR20842">
    <property type="entry name" value="PROTEASE S51 ALPHA-ASPARTYL DIPEPTIDASE"/>
    <property type="match status" value="1"/>
</dbReference>
<dbReference type="Pfam" id="PF03575">
    <property type="entry name" value="Peptidase_S51"/>
    <property type="match status" value="1"/>
</dbReference>
<dbReference type="SUPFAM" id="SSF52317">
    <property type="entry name" value="Class I glutamine amidotransferase-like"/>
    <property type="match status" value="1"/>
</dbReference>
<organism>
    <name type="scientific">Shewanella denitrificans (strain OS217 / ATCC BAA-1090 / DSM 15013)</name>
    <dbReference type="NCBI Taxonomy" id="318161"/>
    <lineage>
        <taxon>Bacteria</taxon>
        <taxon>Pseudomonadati</taxon>
        <taxon>Pseudomonadota</taxon>
        <taxon>Gammaproteobacteria</taxon>
        <taxon>Alteromonadales</taxon>
        <taxon>Shewanellaceae</taxon>
        <taxon>Shewanella</taxon>
    </lineage>
</organism>
<accession>Q12MB3</accession>
<name>PEPE_SHEDO</name>
<evidence type="ECO:0000255" key="1">
    <source>
        <dbReference type="HAMAP-Rule" id="MF_00510"/>
    </source>
</evidence>
<sequence length="235" mass="25833">MAINALMLSSSRVGNTPYLEHAIEFIKPLSQNTKKWLFIPYAGVSVSHDAYLSMVQQGLADLSLEITSIHQSEDPKQAIRDADGIFVGGGNTFQLLNMLYQHDVLALIREQVQAGKPYVGWSAGSNITGLSIRTTNDMPIVEPPSFNALNLLPFQLNPHYSNYQAPGHNGETRAQRLLEFTVVDPLTPVIAIQEGTALWRQGDSLRLVGNKEGYLFHGKQQEVPLAAGSDLSSYL</sequence>
<keyword id="KW-0963">Cytoplasm</keyword>
<keyword id="KW-0224">Dipeptidase</keyword>
<keyword id="KW-0378">Hydrolase</keyword>
<keyword id="KW-0645">Protease</keyword>
<keyword id="KW-1185">Reference proteome</keyword>
<keyword id="KW-0720">Serine protease</keyword>
<gene>
    <name evidence="1" type="primary">pepE</name>
    <name type="ordered locus">Sden_2131</name>
</gene>
<protein>
    <recommendedName>
        <fullName evidence="1">Peptidase E</fullName>
        <ecNumber evidence="1">3.4.13.21</ecNumber>
    </recommendedName>
    <alternativeName>
        <fullName evidence="1">Alpha-aspartyl dipeptidase</fullName>
    </alternativeName>
    <alternativeName>
        <fullName evidence="1">Asp-specific dipeptidase</fullName>
    </alternativeName>
    <alternativeName>
        <fullName evidence="1">Dipeptidase E</fullName>
    </alternativeName>
</protein>